<dbReference type="EC" id="3.4.22.53"/>
<dbReference type="EMBL" id="AF284441">
    <property type="protein sequence ID" value="AAG22771.1"/>
    <property type="molecule type" value="mRNA"/>
</dbReference>
<dbReference type="RefSeq" id="NP_001274615.1">
    <property type="nucleotide sequence ID" value="NM_001287686.1"/>
</dbReference>
<dbReference type="RefSeq" id="XP_045253623.1">
    <property type="nucleotide sequence ID" value="XM_045397688.2"/>
</dbReference>
<dbReference type="SMR" id="Q9GLG1"/>
<dbReference type="STRING" id="9541.ENSMFAP00000033269"/>
<dbReference type="MEROPS" id="C02.002"/>
<dbReference type="GeneID" id="102122692"/>
<dbReference type="VEuPathDB" id="HostDB:ENSMFAG00000003091"/>
<dbReference type="eggNOG" id="KOG0045">
    <property type="taxonomic scope" value="Eukaryota"/>
</dbReference>
<dbReference type="OMA" id="YRDMDVD"/>
<dbReference type="BRENDA" id="3.4.22.53">
    <property type="organism ID" value="1793"/>
</dbReference>
<dbReference type="Proteomes" id="UP000233100">
    <property type="component" value="Chromosome 1"/>
</dbReference>
<dbReference type="GO" id="GO:0005737">
    <property type="term" value="C:cytoplasm"/>
    <property type="evidence" value="ECO:0000250"/>
    <property type="project" value="UniProtKB"/>
</dbReference>
<dbReference type="GO" id="GO:0030425">
    <property type="term" value="C:dendrite"/>
    <property type="evidence" value="ECO:0000250"/>
    <property type="project" value="UniProtKB"/>
</dbReference>
<dbReference type="GO" id="GO:0005886">
    <property type="term" value="C:plasma membrane"/>
    <property type="evidence" value="ECO:0007669"/>
    <property type="project" value="UniProtKB-SubCell"/>
</dbReference>
<dbReference type="GO" id="GO:0005509">
    <property type="term" value="F:calcium ion binding"/>
    <property type="evidence" value="ECO:0007669"/>
    <property type="project" value="InterPro"/>
</dbReference>
<dbReference type="GO" id="GO:0004198">
    <property type="term" value="F:calcium-dependent cysteine-type endopeptidase activity"/>
    <property type="evidence" value="ECO:0000250"/>
    <property type="project" value="UniProtKB"/>
</dbReference>
<dbReference type="GO" id="GO:0071230">
    <property type="term" value="P:cellular response to amino acid stimulus"/>
    <property type="evidence" value="ECO:0000250"/>
    <property type="project" value="UniProtKB"/>
</dbReference>
<dbReference type="GO" id="GO:0006508">
    <property type="term" value="P:proteolysis"/>
    <property type="evidence" value="ECO:0000250"/>
    <property type="project" value="UniProtKB"/>
</dbReference>
<dbReference type="CDD" id="cd00214">
    <property type="entry name" value="Calpain_III"/>
    <property type="match status" value="1"/>
</dbReference>
<dbReference type="CDD" id="cd00044">
    <property type="entry name" value="CysPc"/>
    <property type="match status" value="1"/>
</dbReference>
<dbReference type="CDD" id="cd16199">
    <property type="entry name" value="EFh_PEF_CAPN2"/>
    <property type="match status" value="1"/>
</dbReference>
<dbReference type="FunFam" id="2.60.120.380:FF:000001">
    <property type="entry name" value="Calpain-1 catalytic subunit"/>
    <property type="match status" value="1"/>
</dbReference>
<dbReference type="FunFam" id="3.90.70.10:FF:000001">
    <property type="entry name" value="Calpain-1 catalytic subunit"/>
    <property type="match status" value="1"/>
</dbReference>
<dbReference type="FunFam" id="1.10.238.10:FF:000099">
    <property type="entry name" value="calpain-2 catalytic subunit"/>
    <property type="match status" value="1"/>
</dbReference>
<dbReference type="Gene3D" id="2.60.120.380">
    <property type="match status" value="1"/>
</dbReference>
<dbReference type="Gene3D" id="3.90.70.10">
    <property type="entry name" value="Cysteine proteinases"/>
    <property type="match status" value="1"/>
</dbReference>
<dbReference type="Gene3D" id="1.10.238.10">
    <property type="entry name" value="EF-hand"/>
    <property type="match status" value="1"/>
</dbReference>
<dbReference type="InterPro" id="IPR033883">
    <property type="entry name" value="C2_III"/>
</dbReference>
<dbReference type="InterPro" id="IPR022684">
    <property type="entry name" value="Calpain_cysteine_protease"/>
</dbReference>
<dbReference type="InterPro" id="IPR022682">
    <property type="entry name" value="Calpain_domain_III"/>
</dbReference>
<dbReference type="InterPro" id="IPR022683">
    <property type="entry name" value="Calpain_III"/>
</dbReference>
<dbReference type="InterPro" id="IPR036213">
    <property type="entry name" value="Calpain_III_sf"/>
</dbReference>
<dbReference type="InterPro" id="IPR011992">
    <property type="entry name" value="EF-hand-dom_pair"/>
</dbReference>
<dbReference type="InterPro" id="IPR018247">
    <property type="entry name" value="EF_Hand_1_Ca_BS"/>
</dbReference>
<dbReference type="InterPro" id="IPR002048">
    <property type="entry name" value="EF_hand_dom"/>
</dbReference>
<dbReference type="InterPro" id="IPR042736">
    <property type="entry name" value="EFh_PEF_CAPN2"/>
</dbReference>
<dbReference type="InterPro" id="IPR038765">
    <property type="entry name" value="Papain-like_cys_pep_sf"/>
</dbReference>
<dbReference type="InterPro" id="IPR000169">
    <property type="entry name" value="Pept_cys_AS"/>
</dbReference>
<dbReference type="InterPro" id="IPR001300">
    <property type="entry name" value="Peptidase_C2_calpain_cat"/>
</dbReference>
<dbReference type="PANTHER" id="PTHR10183">
    <property type="entry name" value="CALPAIN"/>
    <property type="match status" value="1"/>
</dbReference>
<dbReference type="PANTHER" id="PTHR10183:SF268">
    <property type="entry name" value="CALPAIN-2 CATALYTIC SUBUNIT"/>
    <property type="match status" value="1"/>
</dbReference>
<dbReference type="Pfam" id="PF01067">
    <property type="entry name" value="Calpain_III"/>
    <property type="match status" value="1"/>
</dbReference>
<dbReference type="Pfam" id="PF13833">
    <property type="entry name" value="EF-hand_8"/>
    <property type="match status" value="1"/>
</dbReference>
<dbReference type="Pfam" id="PF00648">
    <property type="entry name" value="Peptidase_C2"/>
    <property type="match status" value="1"/>
</dbReference>
<dbReference type="PRINTS" id="PR00704">
    <property type="entry name" value="CALPAIN"/>
</dbReference>
<dbReference type="SMART" id="SM00720">
    <property type="entry name" value="calpain_III"/>
    <property type="match status" value="1"/>
</dbReference>
<dbReference type="SMART" id="SM00230">
    <property type="entry name" value="CysPc"/>
    <property type="match status" value="1"/>
</dbReference>
<dbReference type="SUPFAM" id="SSF49758">
    <property type="entry name" value="Calpain large subunit, middle domain (domain III)"/>
    <property type="match status" value="1"/>
</dbReference>
<dbReference type="SUPFAM" id="SSF54001">
    <property type="entry name" value="Cysteine proteinases"/>
    <property type="match status" value="1"/>
</dbReference>
<dbReference type="SUPFAM" id="SSF47473">
    <property type="entry name" value="EF-hand"/>
    <property type="match status" value="1"/>
</dbReference>
<dbReference type="PROSITE" id="PS50203">
    <property type="entry name" value="CALPAIN_CAT"/>
    <property type="match status" value="1"/>
</dbReference>
<dbReference type="PROSITE" id="PS00018">
    <property type="entry name" value="EF_HAND_1"/>
    <property type="match status" value="2"/>
</dbReference>
<dbReference type="PROSITE" id="PS50222">
    <property type="entry name" value="EF_HAND_2"/>
    <property type="match status" value="3"/>
</dbReference>
<dbReference type="PROSITE" id="PS00139">
    <property type="entry name" value="THIOL_PROTEASE_CYS"/>
    <property type="match status" value="1"/>
</dbReference>
<name>CAN2_MACFA</name>
<accession>Q9GLG1</accession>
<sequence length="700" mass="80026">MAGIAAKLVKDREAAEGLGSHERAIKYLNQDYEALRNECLEAGTLFQDPSFPAIPSALGFKELGPYSSKTRGIEWKRPTEICADPQFIIGGATRTDICQGALGDCWLLAAIASLTLNEEILARVVPLNQSFQENYAGIFHFQFWQYGEWVEVVVDDRLPTKDGELLFVHSAEGSEFWSALLEKAYAKINGCYEALSGGATTEGFEDFTGGIAEWYELKKPPPNLFKIIQKALQKGSLLGCSIDITSAADSEAITYQKLVKGHAYSVTGAEEVESSGSLQKLIRIRNPWGEVEWTGRWNDNCPSWNTIDPEERERLTRRHEDGEFWMSFSDFLRHYSRLEICNLTPDTLTSDTYKKWKLTKMDGNWRRGSTAGGCRNYPNTFWMNPQYLIKLEEEDEDEEDGESGCTFLVGLIQKHRRRQRKMGEDMHTIGFGIYEVPEELSGQTNIHLSKNFFLTNRARERSDTFINLREVLNRFKLPPGEYILVPSTFEPNKDGDFCIRVFSEKKADYQAVDDEIEANLEEFDISEDDIDDGFRRLFAQLAGEDAEISAFELQTILRRVLAKRQDIKSDGFSIETCKIMVDMLDSDGSGKLGLKEFYILWTKIQKYQKIYREIDVDRSGTMNSYEMRKALEEAGFKMPCQLHQVIVARFADDQLIIDFDNFVRCLVRLETLFKIFKQLDPENTGTIELDLISWLCFSVL</sequence>
<organism>
    <name type="scientific">Macaca fascicularis</name>
    <name type="common">Crab-eating macaque</name>
    <name type="synonym">Cynomolgus monkey</name>
    <dbReference type="NCBI Taxonomy" id="9541"/>
    <lineage>
        <taxon>Eukaryota</taxon>
        <taxon>Metazoa</taxon>
        <taxon>Chordata</taxon>
        <taxon>Craniata</taxon>
        <taxon>Vertebrata</taxon>
        <taxon>Euteleostomi</taxon>
        <taxon>Mammalia</taxon>
        <taxon>Eutheria</taxon>
        <taxon>Euarchontoglires</taxon>
        <taxon>Primates</taxon>
        <taxon>Haplorrhini</taxon>
        <taxon>Catarrhini</taxon>
        <taxon>Cercopithecidae</taxon>
        <taxon>Cercopithecinae</taxon>
        <taxon>Macaca</taxon>
    </lineage>
</organism>
<proteinExistence type="evidence at transcript level"/>
<evidence type="ECO:0000250" key="1"/>
<evidence type="ECO:0000250" key="2">
    <source>
        <dbReference type="UniProtKB" id="O08529"/>
    </source>
</evidence>
<evidence type="ECO:0000250" key="3">
    <source>
        <dbReference type="UniProtKB" id="P17655"/>
    </source>
</evidence>
<evidence type="ECO:0000250" key="4">
    <source>
        <dbReference type="UniProtKB" id="Q07009"/>
    </source>
</evidence>
<evidence type="ECO:0000255" key="5"/>
<evidence type="ECO:0000255" key="6">
    <source>
        <dbReference type="PROSITE-ProRule" id="PRU00239"/>
    </source>
</evidence>
<evidence type="ECO:0000255" key="7">
    <source>
        <dbReference type="PROSITE-ProRule" id="PRU00448"/>
    </source>
</evidence>
<evidence type="ECO:0000305" key="8"/>
<gene>
    <name type="primary">CAPN2</name>
</gene>
<comment type="function">
    <text evidence="2 3">Calcium-regulated non-lysosomal thiol-protease which catalyzes limited proteolysis of substrates involved in cytoskeletal remodeling and signal transduction. Proteolytically cleaves MYOC at 'Arg-226'. Proteolytically cleaves CPEB3 following neuronal stimulation which abolishes CPEB3 translational repressor activity, leading to translation of CPEB3 target mRNAs.</text>
</comment>
<comment type="catalytic activity">
    <reaction>
        <text>Broad endopeptidase specificity.</text>
        <dbReference type="EC" id="3.4.22.53"/>
    </reaction>
</comment>
<comment type="cofactor">
    <cofactor evidence="1">
        <name>Ca(2+)</name>
        <dbReference type="ChEBI" id="CHEBI:29108"/>
    </cofactor>
    <text evidence="1">Binds 7 Ca(2+) ions.</text>
</comment>
<comment type="activity regulation">
    <text>Activated by 200-1000 micromolar concentrations of calcium and inhibited by calpastatin.</text>
</comment>
<comment type="subunit">
    <text evidence="2 4">Forms a heterodimer with a small (regulatory) subunit (CAPNS1). Interacts with CPEB3; this leads to cleavage of CPEB3.</text>
</comment>
<comment type="subcellular location">
    <subcellularLocation>
        <location evidence="1">Cytoplasm</location>
    </subcellularLocation>
    <subcellularLocation>
        <location evidence="1">Cell membrane</location>
    </subcellularLocation>
    <text evidence="1">Translocates to the plasma membrane upon Ca(2+) binding.</text>
</comment>
<comment type="similarity">
    <text evidence="8">Belongs to the peptidase C2 family.</text>
</comment>
<protein>
    <recommendedName>
        <fullName>Calpain-2 catalytic subunit</fullName>
        <ecNumber>3.4.22.53</ecNumber>
    </recommendedName>
    <alternativeName>
        <fullName>Calcium-activated neutral proteinase 2</fullName>
        <shortName>CANP 2</shortName>
    </alternativeName>
    <alternativeName>
        <fullName>Calpain M-type</fullName>
    </alternativeName>
    <alternativeName>
        <fullName>Calpain-2 large subunit</fullName>
    </alternativeName>
    <alternativeName>
        <fullName>Millimolar-calpain</fullName>
        <shortName>M-calpain</shortName>
    </alternativeName>
</protein>
<reference key="1">
    <citation type="journal article" date="2001" name="Biochim. Biophys. Acta">
        <title>Different expression patterns for ubiquitous calpains and Capn3 splice variants in monkey ocular tissues.</title>
        <authorList>
            <person name="Nakajima T."/>
            <person name="Fukiage C."/>
            <person name="Azuma M."/>
            <person name="Ma H."/>
            <person name="Shearer T.R."/>
        </authorList>
    </citation>
    <scope>NUCLEOTIDE SEQUENCE [MRNA]</scope>
    <source>
        <tissue>Retina</tissue>
    </source>
</reference>
<feature type="initiator methionine" description="Removed" evidence="3">
    <location>
        <position position="1"/>
    </location>
</feature>
<feature type="propeptide" id="PRO_0000026489" description="Anchors to the small subunit" evidence="5">
    <location>
        <begin position="2"/>
        <end position="19"/>
    </location>
</feature>
<feature type="chain" id="PRO_0000026490" description="Calpain-2 catalytic subunit">
    <location>
        <begin position="20"/>
        <end position="700"/>
    </location>
</feature>
<feature type="domain" description="Calpain catalytic" evidence="6">
    <location>
        <begin position="45"/>
        <end position="344"/>
    </location>
</feature>
<feature type="domain" description="EF-hand 1" evidence="7">
    <location>
        <begin position="572"/>
        <end position="605"/>
    </location>
</feature>
<feature type="domain" description="EF-hand 2" evidence="7">
    <location>
        <begin position="602"/>
        <end position="637"/>
    </location>
</feature>
<feature type="domain" description="EF-hand 3" evidence="7">
    <location>
        <begin position="667"/>
        <end position="700"/>
    </location>
</feature>
<feature type="region of interest" description="Domain III">
    <location>
        <begin position="345"/>
        <end position="514"/>
    </location>
</feature>
<feature type="region of interest" description="Linker">
    <location>
        <begin position="515"/>
        <end position="529"/>
    </location>
</feature>
<feature type="region of interest" description="Domain IV">
    <location>
        <begin position="530"/>
        <end position="700"/>
    </location>
</feature>
<feature type="active site" evidence="1">
    <location>
        <position position="105"/>
    </location>
</feature>
<feature type="active site" evidence="1">
    <location>
        <position position="262"/>
    </location>
</feature>
<feature type="active site" evidence="1">
    <location>
        <position position="286"/>
    </location>
</feature>
<feature type="binding site" evidence="1">
    <location>
        <position position="89"/>
    </location>
    <ligand>
        <name>Ca(2+)</name>
        <dbReference type="ChEBI" id="CHEBI:29108"/>
        <label>3</label>
    </ligand>
</feature>
<feature type="binding site" evidence="1">
    <location>
        <position position="91"/>
    </location>
    <ligand>
        <name>Ca(2+)</name>
        <dbReference type="ChEBI" id="CHEBI:29108"/>
        <label>3</label>
    </ligand>
</feature>
<feature type="binding site" evidence="1">
    <location>
        <position position="96"/>
    </location>
    <ligand>
        <name>Ca(2+)</name>
        <dbReference type="ChEBI" id="CHEBI:29108"/>
        <label>3</label>
    </ligand>
</feature>
<feature type="binding site" evidence="1">
    <location>
        <position position="175"/>
    </location>
    <ligand>
        <name>Ca(2+)</name>
        <dbReference type="ChEBI" id="CHEBI:29108"/>
        <label>3</label>
    </ligand>
</feature>
<feature type="binding site" evidence="1">
    <location>
        <position position="229"/>
    </location>
    <ligand>
        <name>Ca(2+)</name>
        <dbReference type="ChEBI" id="CHEBI:29108"/>
        <label>2</label>
    </ligand>
</feature>
<feature type="binding site" evidence="1">
    <location>
        <position position="230"/>
    </location>
    <ligand>
        <name>Ca(2+)</name>
        <dbReference type="ChEBI" id="CHEBI:29108"/>
        <label>2</label>
    </ligand>
</feature>
<feature type="binding site" evidence="1">
    <location>
        <position position="292"/>
    </location>
    <ligand>
        <name>Ca(2+)</name>
        <dbReference type="ChEBI" id="CHEBI:29108"/>
        <label>4</label>
    </ligand>
</feature>
<feature type="binding site" evidence="1">
    <location>
        <position position="299"/>
    </location>
    <ligand>
        <name>Ca(2+)</name>
        <dbReference type="ChEBI" id="CHEBI:29108"/>
        <label>4</label>
    </ligand>
</feature>
<feature type="binding site" evidence="1">
    <location>
        <position position="323"/>
    </location>
    <ligand>
        <name>Ca(2+)</name>
        <dbReference type="ChEBI" id="CHEBI:29108"/>
        <label>4</label>
    </ligand>
</feature>
<feature type="binding site" evidence="1">
    <location>
        <position position="542"/>
    </location>
    <ligand>
        <name>Ca(2+)</name>
        <dbReference type="ChEBI" id="CHEBI:29108"/>
        <label>5</label>
    </ligand>
</feature>
<feature type="binding site" evidence="1">
    <location>
        <position position="545"/>
    </location>
    <ligand>
        <name>Ca(2+)</name>
        <dbReference type="ChEBI" id="CHEBI:29108"/>
        <label>5</label>
    </ligand>
</feature>
<feature type="binding site" evidence="1">
    <location>
        <position position="547"/>
    </location>
    <ligand>
        <name>Ca(2+)</name>
        <dbReference type="ChEBI" id="CHEBI:29108"/>
        <label>5</label>
    </ligand>
</feature>
<feature type="binding site" evidence="1">
    <location>
        <position position="552"/>
    </location>
    <ligand>
        <name>Ca(2+)</name>
        <dbReference type="ChEBI" id="CHEBI:29108"/>
        <label>5</label>
    </ligand>
</feature>
<feature type="binding site" evidence="7">
    <location>
        <position position="585"/>
    </location>
    <ligand>
        <name>Ca(2+)</name>
        <dbReference type="ChEBI" id="CHEBI:29108"/>
        <label>6</label>
    </ligand>
</feature>
<feature type="binding site" evidence="7">
    <location>
        <position position="587"/>
    </location>
    <ligand>
        <name>Ca(2+)</name>
        <dbReference type="ChEBI" id="CHEBI:29108"/>
        <label>6</label>
    </ligand>
</feature>
<feature type="binding site" evidence="7">
    <location>
        <position position="589"/>
    </location>
    <ligand>
        <name>Ca(2+)</name>
        <dbReference type="ChEBI" id="CHEBI:29108"/>
        <label>6</label>
    </ligand>
</feature>
<feature type="binding site" evidence="7">
    <location>
        <position position="591"/>
    </location>
    <ligand>
        <name>Ca(2+)</name>
        <dbReference type="ChEBI" id="CHEBI:29108"/>
        <label>6</label>
    </ligand>
</feature>
<feature type="binding site" evidence="7">
    <location>
        <position position="596"/>
    </location>
    <ligand>
        <name>Ca(2+)</name>
        <dbReference type="ChEBI" id="CHEBI:29108"/>
        <label>6</label>
    </ligand>
</feature>
<feature type="binding site" evidence="7">
    <location>
        <position position="615"/>
    </location>
    <ligand>
        <name>Ca(2+)</name>
        <dbReference type="ChEBI" id="CHEBI:29108"/>
        <label>7</label>
    </ligand>
</feature>
<feature type="binding site" evidence="7">
    <location>
        <position position="617"/>
    </location>
    <ligand>
        <name>Ca(2+)</name>
        <dbReference type="ChEBI" id="CHEBI:29108"/>
        <label>7</label>
    </ligand>
</feature>
<feature type="binding site" evidence="7">
    <location>
        <position position="619"/>
    </location>
    <ligand>
        <name>Ca(2+)</name>
        <dbReference type="ChEBI" id="CHEBI:29108"/>
        <label>7</label>
    </ligand>
</feature>
<feature type="binding site" evidence="7">
    <location>
        <position position="621"/>
    </location>
    <ligand>
        <name>Ca(2+)</name>
        <dbReference type="ChEBI" id="CHEBI:29108"/>
        <label>7</label>
    </ligand>
</feature>
<feature type="binding site" evidence="7">
    <location>
        <position position="626"/>
    </location>
    <ligand>
        <name>Ca(2+)</name>
        <dbReference type="ChEBI" id="CHEBI:29108"/>
        <label>7</label>
    </ligand>
</feature>
<feature type="binding site" evidence="1">
    <location>
        <position position="658"/>
    </location>
    <ligand>
        <name>Ca(2+)</name>
        <dbReference type="ChEBI" id="CHEBI:29108"/>
        <label>1</label>
    </ligand>
</feature>
<feature type="binding site" evidence="1">
    <location>
        <position position="661"/>
    </location>
    <ligand>
        <name>Ca(2+)</name>
        <dbReference type="ChEBI" id="CHEBI:29108"/>
        <label>1</label>
    </ligand>
</feature>
<feature type="modified residue" description="N-acetylalanine" evidence="3">
    <location>
        <position position="2"/>
    </location>
</feature>
<keyword id="KW-0007">Acetylation</keyword>
<keyword id="KW-0106">Calcium</keyword>
<keyword id="KW-1003">Cell membrane</keyword>
<keyword id="KW-0963">Cytoplasm</keyword>
<keyword id="KW-0378">Hydrolase</keyword>
<keyword id="KW-0472">Membrane</keyword>
<keyword id="KW-0479">Metal-binding</keyword>
<keyword id="KW-0645">Protease</keyword>
<keyword id="KW-1185">Reference proteome</keyword>
<keyword id="KW-0677">Repeat</keyword>
<keyword id="KW-0788">Thiol protease</keyword>